<name>C71A2_SOLME</name>
<dbReference type="EC" id="1.14.-.-"/>
<dbReference type="EMBL" id="D14990">
    <property type="protein sequence ID" value="BAA03635.1"/>
    <property type="molecule type" value="mRNA"/>
</dbReference>
<dbReference type="EMBL" id="X71654">
    <property type="protein sequence ID" value="CAA50645.1"/>
    <property type="molecule type" value="mRNA"/>
</dbReference>
<dbReference type="PIR" id="S36806">
    <property type="entry name" value="S36806"/>
</dbReference>
<dbReference type="SMR" id="P37118"/>
<dbReference type="GO" id="GO:0016020">
    <property type="term" value="C:membrane"/>
    <property type="evidence" value="ECO:0007669"/>
    <property type="project" value="UniProtKB-SubCell"/>
</dbReference>
<dbReference type="GO" id="GO:0020037">
    <property type="term" value="F:heme binding"/>
    <property type="evidence" value="ECO:0007669"/>
    <property type="project" value="InterPro"/>
</dbReference>
<dbReference type="GO" id="GO:0005506">
    <property type="term" value="F:iron ion binding"/>
    <property type="evidence" value="ECO:0007669"/>
    <property type="project" value="InterPro"/>
</dbReference>
<dbReference type="GO" id="GO:0004497">
    <property type="term" value="F:monooxygenase activity"/>
    <property type="evidence" value="ECO:0007669"/>
    <property type="project" value="UniProtKB-KW"/>
</dbReference>
<dbReference type="GO" id="GO:0016705">
    <property type="term" value="F:oxidoreductase activity, acting on paired donors, with incorporation or reduction of molecular oxygen"/>
    <property type="evidence" value="ECO:0007669"/>
    <property type="project" value="InterPro"/>
</dbReference>
<dbReference type="CDD" id="cd11072">
    <property type="entry name" value="CYP71-like"/>
    <property type="match status" value="1"/>
</dbReference>
<dbReference type="FunFam" id="1.10.630.10:FF:000011">
    <property type="entry name" value="Cytochrome P450 83B1"/>
    <property type="match status" value="1"/>
</dbReference>
<dbReference type="Gene3D" id="1.10.630.10">
    <property type="entry name" value="Cytochrome P450"/>
    <property type="match status" value="1"/>
</dbReference>
<dbReference type="InterPro" id="IPR001128">
    <property type="entry name" value="Cyt_P450"/>
</dbReference>
<dbReference type="InterPro" id="IPR017972">
    <property type="entry name" value="Cyt_P450_CS"/>
</dbReference>
<dbReference type="InterPro" id="IPR002401">
    <property type="entry name" value="Cyt_P450_E_grp-I"/>
</dbReference>
<dbReference type="InterPro" id="IPR036396">
    <property type="entry name" value="Cyt_P450_sf"/>
</dbReference>
<dbReference type="PANTHER" id="PTHR47955:SF17">
    <property type="entry name" value="CYTOCHROME 71A4"/>
    <property type="match status" value="1"/>
</dbReference>
<dbReference type="PANTHER" id="PTHR47955">
    <property type="entry name" value="CYTOCHROME P450 FAMILY 71 PROTEIN"/>
    <property type="match status" value="1"/>
</dbReference>
<dbReference type="Pfam" id="PF00067">
    <property type="entry name" value="p450"/>
    <property type="match status" value="1"/>
</dbReference>
<dbReference type="PRINTS" id="PR00463">
    <property type="entry name" value="EP450I"/>
</dbReference>
<dbReference type="PRINTS" id="PR00385">
    <property type="entry name" value="P450"/>
</dbReference>
<dbReference type="SUPFAM" id="SSF48264">
    <property type="entry name" value="Cytochrome P450"/>
    <property type="match status" value="1"/>
</dbReference>
<dbReference type="PROSITE" id="PS00086">
    <property type="entry name" value="CYTOCHROME_P450"/>
    <property type="match status" value="1"/>
</dbReference>
<accession>P37118</accession>
<proteinExistence type="evidence at transcript level"/>
<evidence type="ECO:0000250" key="1"/>
<evidence type="ECO:0000255" key="2"/>
<evidence type="ECO:0000305" key="3"/>
<protein>
    <recommendedName>
        <fullName>Cytochrome P450 71A2</fullName>
        <ecNumber>1.14.-.-</ecNumber>
    </recommendedName>
    <alternativeName>
        <fullName>CYPLXXIA2</fullName>
    </alternativeName>
    <alternativeName>
        <fullName>Cytochrome P-450EG4</fullName>
    </alternativeName>
</protein>
<organism>
    <name type="scientific">Solanum melongena</name>
    <name type="common">Eggplant</name>
    <name type="synonym">Aubergine</name>
    <dbReference type="NCBI Taxonomy" id="223891"/>
    <lineage>
        <taxon>Eukaryota</taxon>
        <taxon>Viridiplantae</taxon>
        <taxon>Streptophyta</taxon>
        <taxon>Embryophyta</taxon>
        <taxon>Tracheophyta</taxon>
        <taxon>Spermatophyta</taxon>
        <taxon>Magnoliopsida</taxon>
        <taxon>eudicotyledons</taxon>
        <taxon>Gunneridae</taxon>
        <taxon>Pentapetalae</taxon>
        <taxon>asterids</taxon>
        <taxon>lamiids</taxon>
        <taxon>Solanales</taxon>
        <taxon>Solanaceae</taxon>
        <taxon>Solanoideae</taxon>
        <taxon>Solaneae</taxon>
        <taxon>Solanum</taxon>
    </lineage>
</organism>
<reference key="1">
    <citation type="journal article" date="1993" name="FEBS Lett.">
        <title>cDNAs sequences encoding cytochrome P450 (CYP71 family) from eggplant seedlings.</title>
        <authorList>
            <person name="Umemoto N."/>
            <person name="Kobayashi O."/>
            <person name="Ishizaki-Nishizawa O."/>
            <person name="Toguri T."/>
        </authorList>
    </citation>
    <scope>NUCLEOTIDE SEQUENCE [MRNA]</scope>
    <source>
        <strain>cv. Sinsadoharanasu</strain>
        <tissue>Hypocotyl</tissue>
    </source>
</reference>
<feature type="chain" id="PRO_0000052057" description="Cytochrome P450 71A2">
    <location>
        <begin position="1"/>
        <end position="505"/>
    </location>
</feature>
<feature type="transmembrane region" description="Helical" evidence="2">
    <location>
        <begin position="7"/>
        <end position="27"/>
    </location>
</feature>
<feature type="binding site" description="axial binding residue" evidence="1">
    <location>
        <position position="448"/>
    </location>
    <ligand>
        <name>heme</name>
        <dbReference type="ChEBI" id="CHEBI:30413"/>
    </ligand>
    <ligandPart>
        <name>Fe</name>
        <dbReference type="ChEBI" id="CHEBI:18248"/>
    </ligandPart>
</feature>
<gene>
    <name type="primary">CYP71A2</name>
    <name type="synonym">CYPEG4</name>
</gene>
<comment type="function">
    <text>May have a role in maturation, such as during flavor formation or other metabolite production specific to aging tissues.</text>
</comment>
<comment type="cofactor">
    <cofactor evidence="1">
        <name>heme</name>
        <dbReference type="ChEBI" id="CHEBI:30413"/>
    </cofactor>
</comment>
<comment type="subcellular location">
    <subcellularLocation>
        <location evidence="3">Membrane</location>
    </subcellularLocation>
    <subcellularLocation>
        <location>Membrane</location>
        <topology>Single-pass membrane protein</topology>
    </subcellularLocation>
</comment>
<comment type="similarity">
    <text evidence="3">Belongs to the cytochrome P450 family.</text>
</comment>
<keyword id="KW-0349">Heme</keyword>
<keyword id="KW-0408">Iron</keyword>
<keyword id="KW-0472">Membrane</keyword>
<keyword id="KW-0479">Metal-binding</keyword>
<keyword id="KW-0503">Monooxygenase</keyword>
<keyword id="KW-0560">Oxidoreductase</keyword>
<keyword id="KW-0812">Transmembrane</keyword>
<keyword id="KW-1133">Transmembrane helix</keyword>
<sequence length="505" mass="57092">MDVPCPWYSLLIPLFVFIFLLIHHCFFTTSKKQNMLLLPSPRKLPIIGNLHQLGSLPHRSLHKLSQKYGPVMLLHFGSKPVIVASSVDAARDIMKTHDVVWASRPKSSIVDRLSYGSKDVGFSPFGEYWRRAKSITVLHLLSNTRVQSYRNVRAEETANMIGKIRQGCDSSVINLGEHLCSLTNNIISRVALGRTYDEKESGIEHIIEQFVELLGIFNVGDYIPRLEWVNKFTGLDAKVKKVAKELDMFLEIVIEEHIIRKKKEEYTSTGEAKDFVDVLLEIQNGNETDFPLQRDSLKAILLDSFAAGTDTTFATLDWTMAELLRQPRALKTLQDEVRGLAQGKSEITEDDLKNMQYLRAVIKESLRLHPTQESLLVPRESMEDVNLLGYYHIPARTQAIINAWAIGRDPLSWENPEEYQPERFLNSDADVKGLNFKLLPFGAGRRGCPGSSFAIAVIELALARLVHKFDFALPEGIKPEDLDMTETIGITTRRKLPLLVVATPC</sequence>